<proteinExistence type="inferred from homology"/>
<keyword id="KW-0067">ATP-binding</keyword>
<keyword id="KW-1003">Cell membrane</keyword>
<keyword id="KW-0963">Cytoplasm</keyword>
<keyword id="KW-0472">Membrane</keyword>
<keyword id="KW-0479">Metal-binding</keyword>
<keyword id="KW-0547">Nucleotide-binding</keyword>
<keyword id="KW-0653">Protein transport</keyword>
<keyword id="KW-1185">Reference proteome</keyword>
<keyword id="KW-1278">Translocase</keyword>
<keyword id="KW-0811">Translocation</keyword>
<keyword id="KW-0813">Transport</keyword>
<keyword id="KW-0862">Zinc</keyword>
<gene>
    <name evidence="1" type="primary">secA</name>
    <name type="ordered locus">Noca_1440</name>
</gene>
<evidence type="ECO:0000255" key="1">
    <source>
        <dbReference type="HAMAP-Rule" id="MF_01382"/>
    </source>
</evidence>
<evidence type="ECO:0000256" key="2">
    <source>
        <dbReference type="SAM" id="MobiDB-lite"/>
    </source>
</evidence>
<accession>A1SGL9</accession>
<feature type="chain" id="PRO_0000318399" description="Protein translocase subunit SecA">
    <location>
        <begin position="1"/>
        <end position="937"/>
    </location>
</feature>
<feature type="region of interest" description="Disordered" evidence="2">
    <location>
        <begin position="868"/>
        <end position="889"/>
    </location>
</feature>
<feature type="region of interest" description="Disordered" evidence="2">
    <location>
        <begin position="915"/>
        <end position="937"/>
    </location>
</feature>
<feature type="binding site" evidence="1">
    <location>
        <position position="86"/>
    </location>
    <ligand>
        <name>ATP</name>
        <dbReference type="ChEBI" id="CHEBI:30616"/>
    </ligand>
</feature>
<feature type="binding site" evidence="1">
    <location>
        <begin position="104"/>
        <end position="108"/>
    </location>
    <ligand>
        <name>ATP</name>
        <dbReference type="ChEBI" id="CHEBI:30616"/>
    </ligand>
</feature>
<feature type="binding site" evidence="1">
    <location>
        <position position="493"/>
    </location>
    <ligand>
        <name>ATP</name>
        <dbReference type="ChEBI" id="CHEBI:30616"/>
    </ligand>
</feature>
<feature type="binding site" evidence="1">
    <location>
        <position position="911"/>
    </location>
    <ligand>
        <name>Zn(2+)</name>
        <dbReference type="ChEBI" id="CHEBI:29105"/>
    </ligand>
</feature>
<feature type="binding site" evidence="1">
    <location>
        <position position="913"/>
    </location>
    <ligand>
        <name>Zn(2+)</name>
        <dbReference type="ChEBI" id="CHEBI:29105"/>
    </ligand>
</feature>
<feature type="binding site" evidence="1">
    <location>
        <position position="922"/>
    </location>
    <ligand>
        <name>Zn(2+)</name>
        <dbReference type="ChEBI" id="CHEBI:29105"/>
    </ligand>
</feature>
<feature type="binding site" evidence="1">
    <location>
        <position position="923"/>
    </location>
    <ligand>
        <name>Zn(2+)</name>
        <dbReference type="ChEBI" id="CHEBI:29105"/>
    </ligand>
</feature>
<protein>
    <recommendedName>
        <fullName evidence="1">Protein translocase subunit SecA</fullName>
        <ecNumber evidence="1">7.4.2.8</ecNumber>
    </recommendedName>
</protein>
<sequence>MPAILDKILRIGEGKILRQLEAIAQAVNAIEDDFVAMSDAELQGMTAEFKERLANGESLDDIMPEAFATVREAARRVIGLRPFDVQVMGAGALHMGNIAEMKTGEGKTLVAVLPSYLNALSGKGVHIVTVNDYLAKFQSEMMGRVHHFLGLTVGVILPEMRPDERRVAYNCDITYGTNNELGFDYLRDNMAGSIEECVQRGHNFAIVDEVDSILIDEARTPLIISGPTQDEVHWYAEFAKVARNLVRDEDYEVDEKKRTISVLEPGITKVEDHLGIENLYESANTPLISFLHNSIKAKELFHNDKEYVVLNGEVLIVDEHTGRMLAGRRYNDGLHQAIEAKEDVQVREEYQTLATVTLQNYFRLYDKLSGMTGTAMTEASEFDKIYKLGVVPIPTNKPMARKDQADLVYRTEEAKYEAVVEDIAERHEKGQPILVGTVSVEKSEHLSAKLKKRGIPHSVLNAKVHADEAKIVALAGHKGAVTVATNMAGRGTDIMLGGSVEFLADAELRKRGLEPAGETADEYQAEWPGTVERIKSQVANEHDEVRALGGLYVVGTERHESRRIDNQLRGRSGRQGDPGESRFYLSLQDELMRLFKSDWVDRVLQVLKIPDDVPIENKRVTSAIANAQGQVESQNFESRKNVLKYDDVMDRQRKVIYAERREVLEGKDLQDQIRTFIDDTVTGYVTGATEEFAEEWDLEALWTALRQIYPVGVDYRVLEEEAGGRANMDRDELIAVLQKDAHEAYDRREAEVGETVMRELERRVVLSVLDRKWREHLYEMDYLREGIYLRAYSQRDPLVEYQREGFEMFAAMMDGIKEESVGFLFNLEVQVEIEEEDEEEEEVLEPMRQPVPSFDQQGAMPQIRAKGLERPSQPTKLAYSAPSEDGDAEVKGATVTNADDEFAGVGRNDRCPCGSGKKFKQCHGRPGGPTGLTARVS</sequence>
<dbReference type="EC" id="7.4.2.8" evidence="1"/>
<dbReference type="EMBL" id="CP000509">
    <property type="protein sequence ID" value="ABL80954.1"/>
    <property type="molecule type" value="Genomic_DNA"/>
</dbReference>
<dbReference type="RefSeq" id="WP_011754902.1">
    <property type="nucleotide sequence ID" value="NC_008699.1"/>
</dbReference>
<dbReference type="SMR" id="A1SGL9"/>
<dbReference type="STRING" id="196162.Noca_1440"/>
<dbReference type="KEGG" id="nca:Noca_1440"/>
<dbReference type="eggNOG" id="COG0653">
    <property type="taxonomic scope" value="Bacteria"/>
</dbReference>
<dbReference type="HOGENOM" id="CLU_005314_3_0_11"/>
<dbReference type="OrthoDB" id="9805579at2"/>
<dbReference type="Proteomes" id="UP000000640">
    <property type="component" value="Chromosome"/>
</dbReference>
<dbReference type="GO" id="GO:0031522">
    <property type="term" value="C:cell envelope Sec protein transport complex"/>
    <property type="evidence" value="ECO:0007669"/>
    <property type="project" value="TreeGrafter"/>
</dbReference>
<dbReference type="GO" id="GO:0005829">
    <property type="term" value="C:cytosol"/>
    <property type="evidence" value="ECO:0007669"/>
    <property type="project" value="TreeGrafter"/>
</dbReference>
<dbReference type="GO" id="GO:0005886">
    <property type="term" value="C:plasma membrane"/>
    <property type="evidence" value="ECO:0007669"/>
    <property type="project" value="UniProtKB-SubCell"/>
</dbReference>
<dbReference type="GO" id="GO:0005524">
    <property type="term" value="F:ATP binding"/>
    <property type="evidence" value="ECO:0007669"/>
    <property type="project" value="UniProtKB-UniRule"/>
</dbReference>
<dbReference type="GO" id="GO:0046872">
    <property type="term" value="F:metal ion binding"/>
    <property type="evidence" value="ECO:0007669"/>
    <property type="project" value="UniProtKB-KW"/>
</dbReference>
<dbReference type="GO" id="GO:0008564">
    <property type="term" value="F:protein-exporting ATPase activity"/>
    <property type="evidence" value="ECO:0007669"/>
    <property type="project" value="UniProtKB-EC"/>
</dbReference>
<dbReference type="GO" id="GO:0065002">
    <property type="term" value="P:intracellular protein transmembrane transport"/>
    <property type="evidence" value="ECO:0007669"/>
    <property type="project" value="UniProtKB-UniRule"/>
</dbReference>
<dbReference type="GO" id="GO:0017038">
    <property type="term" value="P:protein import"/>
    <property type="evidence" value="ECO:0007669"/>
    <property type="project" value="InterPro"/>
</dbReference>
<dbReference type="GO" id="GO:0006605">
    <property type="term" value="P:protein targeting"/>
    <property type="evidence" value="ECO:0007669"/>
    <property type="project" value="UniProtKB-UniRule"/>
</dbReference>
<dbReference type="GO" id="GO:0043952">
    <property type="term" value="P:protein transport by the Sec complex"/>
    <property type="evidence" value="ECO:0007669"/>
    <property type="project" value="TreeGrafter"/>
</dbReference>
<dbReference type="CDD" id="cd17928">
    <property type="entry name" value="DEXDc_SecA"/>
    <property type="match status" value="1"/>
</dbReference>
<dbReference type="CDD" id="cd18803">
    <property type="entry name" value="SF2_C_secA"/>
    <property type="match status" value="1"/>
</dbReference>
<dbReference type="FunFam" id="1.10.3060.10:FF:000002">
    <property type="entry name" value="Preprotein translocase subunit SecA"/>
    <property type="match status" value="1"/>
</dbReference>
<dbReference type="FunFam" id="3.40.50.300:FF:000113">
    <property type="entry name" value="Preprotein translocase subunit SecA"/>
    <property type="match status" value="1"/>
</dbReference>
<dbReference type="FunFam" id="3.40.50.300:FF:000334">
    <property type="entry name" value="Protein translocase subunit SecA"/>
    <property type="match status" value="1"/>
</dbReference>
<dbReference type="FunFam" id="3.90.1440.10:FF:000002">
    <property type="entry name" value="Protein translocase subunit SecA"/>
    <property type="match status" value="1"/>
</dbReference>
<dbReference type="Gene3D" id="1.10.3060.10">
    <property type="entry name" value="Helical scaffold and wing domains of SecA"/>
    <property type="match status" value="1"/>
</dbReference>
<dbReference type="Gene3D" id="3.40.50.300">
    <property type="entry name" value="P-loop containing nucleotide triphosphate hydrolases"/>
    <property type="match status" value="2"/>
</dbReference>
<dbReference type="Gene3D" id="3.90.1440.10">
    <property type="entry name" value="SecA, preprotein cross-linking domain"/>
    <property type="match status" value="1"/>
</dbReference>
<dbReference type="HAMAP" id="MF_01382">
    <property type="entry name" value="SecA"/>
    <property type="match status" value="1"/>
</dbReference>
<dbReference type="InterPro" id="IPR014001">
    <property type="entry name" value="Helicase_ATP-bd"/>
</dbReference>
<dbReference type="InterPro" id="IPR001650">
    <property type="entry name" value="Helicase_C-like"/>
</dbReference>
<dbReference type="InterPro" id="IPR027417">
    <property type="entry name" value="P-loop_NTPase"/>
</dbReference>
<dbReference type="InterPro" id="IPR004027">
    <property type="entry name" value="SEC_C_motif"/>
</dbReference>
<dbReference type="InterPro" id="IPR000185">
    <property type="entry name" value="SecA"/>
</dbReference>
<dbReference type="InterPro" id="IPR020937">
    <property type="entry name" value="SecA_CS"/>
</dbReference>
<dbReference type="InterPro" id="IPR011115">
    <property type="entry name" value="SecA_DEAD"/>
</dbReference>
<dbReference type="InterPro" id="IPR014018">
    <property type="entry name" value="SecA_motor_DEAD"/>
</dbReference>
<dbReference type="InterPro" id="IPR011130">
    <property type="entry name" value="SecA_preprotein_X-link_dom"/>
</dbReference>
<dbReference type="InterPro" id="IPR044722">
    <property type="entry name" value="SecA_SF2_C"/>
</dbReference>
<dbReference type="InterPro" id="IPR011116">
    <property type="entry name" value="SecA_Wing/Scaffold"/>
</dbReference>
<dbReference type="InterPro" id="IPR036266">
    <property type="entry name" value="SecA_Wing/Scaffold_sf"/>
</dbReference>
<dbReference type="InterPro" id="IPR036670">
    <property type="entry name" value="SecA_X-link_sf"/>
</dbReference>
<dbReference type="NCBIfam" id="NF009538">
    <property type="entry name" value="PRK12904.1"/>
    <property type="match status" value="1"/>
</dbReference>
<dbReference type="NCBIfam" id="TIGR00963">
    <property type="entry name" value="secA"/>
    <property type="match status" value="1"/>
</dbReference>
<dbReference type="PANTHER" id="PTHR30612:SF0">
    <property type="entry name" value="CHLOROPLAST PROTEIN-TRANSPORTING ATPASE"/>
    <property type="match status" value="1"/>
</dbReference>
<dbReference type="PANTHER" id="PTHR30612">
    <property type="entry name" value="SECA INNER MEMBRANE COMPONENT OF SEC PROTEIN SECRETION SYSTEM"/>
    <property type="match status" value="1"/>
</dbReference>
<dbReference type="Pfam" id="PF21090">
    <property type="entry name" value="P-loop_SecA"/>
    <property type="match status" value="1"/>
</dbReference>
<dbReference type="Pfam" id="PF02810">
    <property type="entry name" value="SEC-C"/>
    <property type="match status" value="1"/>
</dbReference>
<dbReference type="Pfam" id="PF07517">
    <property type="entry name" value="SecA_DEAD"/>
    <property type="match status" value="1"/>
</dbReference>
<dbReference type="Pfam" id="PF01043">
    <property type="entry name" value="SecA_PP_bind"/>
    <property type="match status" value="1"/>
</dbReference>
<dbReference type="Pfam" id="PF07516">
    <property type="entry name" value="SecA_SW"/>
    <property type="match status" value="1"/>
</dbReference>
<dbReference type="PRINTS" id="PR00906">
    <property type="entry name" value="SECA"/>
</dbReference>
<dbReference type="SMART" id="SM00957">
    <property type="entry name" value="SecA_DEAD"/>
    <property type="match status" value="1"/>
</dbReference>
<dbReference type="SMART" id="SM00958">
    <property type="entry name" value="SecA_PP_bind"/>
    <property type="match status" value="1"/>
</dbReference>
<dbReference type="SUPFAM" id="SSF81886">
    <property type="entry name" value="Helical scaffold and wing domains of SecA"/>
    <property type="match status" value="1"/>
</dbReference>
<dbReference type="SUPFAM" id="SSF52540">
    <property type="entry name" value="P-loop containing nucleoside triphosphate hydrolases"/>
    <property type="match status" value="2"/>
</dbReference>
<dbReference type="SUPFAM" id="SSF81767">
    <property type="entry name" value="Pre-protein crosslinking domain of SecA"/>
    <property type="match status" value="1"/>
</dbReference>
<dbReference type="PROSITE" id="PS01312">
    <property type="entry name" value="SECA"/>
    <property type="match status" value="1"/>
</dbReference>
<dbReference type="PROSITE" id="PS51196">
    <property type="entry name" value="SECA_MOTOR_DEAD"/>
    <property type="match status" value="1"/>
</dbReference>
<organism>
    <name type="scientific">Nocardioides sp. (strain ATCC BAA-499 / JS614)</name>
    <dbReference type="NCBI Taxonomy" id="196162"/>
    <lineage>
        <taxon>Bacteria</taxon>
        <taxon>Bacillati</taxon>
        <taxon>Actinomycetota</taxon>
        <taxon>Actinomycetes</taxon>
        <taxon>Propionibacteriales</taxon>
        <taxon>Nocardioidaceae</taxon>
        <taxon>Nocardioides</taxon>
    </lineage>
</organism>
<name>SECA_NOCSJ</name>
<comment type="function">
    <text evidence="1">Part of the Sec protein translocase complex. Interacts with the SecYEG preprotein conducting channel. Has a central role in coupling the hydrolysis of ATP to the transfer of proteins into and across the cell membrane, serving as an ATP-driven molecular motor driving the stepwise translocation of polypeptide chains across the membrane.</text>
</comment>
<comment type="catalytic activity">
    <reaction evidence="1">
        <text>ATP + H2O + cellular proteinSide 1 = ADP + phosphate + cellular proteinSide 2.</text>
        <dbReference type="EC" id="7.4.2.8"/>
    </reaction>
</comment>
<comment type="cofactor">
    <cofactor evidence="1">
        <name>Zn(2+)</name>
        <dbReference type="ChEBI" id="CHEBI:29105"/>
    </cofactor>
    <text evidence="1">May bind 1 zinc ion per subunit.</text>
</comment>
<comment type="subunit">
    <text evidence="1">Monomer and homodimer. Part of the essential Sec protein translocation apparatus which comprises SecA, SecYEG and auxiliary proteins SecDF. Other proteins may also be involved.</text>
</comment>
<comment type="subcellular location">
    <subcellularLocation>
        <location evidence="1">Cell membrane</location>
        <topology evidence="1">Peripheral membrane protein</topology>
        <orientation evidence="1">Cytoplasmic side</orientation>
    </subcellularLocation>
    <subcellularLocation>
        <location evidence="1">Cytoplasm</location>
    </subcellularLocation>
    <text evidence="1">Distribution is 50-50.</text>
</comment>
<comment type="similarity">
    <text evidence="1">Belongs to the SecA family.</text>
</comment>
<reference key="1">
    <citation type="submission" date="2006-12" db="EMBL/GenBank/DDBJ databases">
        <title>Complete sequence of chromosome 1 of Nocardioides sp. JS614.</title>
        <authorList>
            <person name="Copeland A."/>
            <person name="Lucas S."/>
            <person name="Lapidus A."/>
            <person name="Barry K."/>
            <person name="Detter J.C."/>
            <person name="Glavina del Rio T."/>
            <person name="Hammon N."/>
            <person name="Israni S."/>
            <person name="Dalin E."/>
            <person name="Tice H."/>
            <person name="Pitluck S."/>
            <person name="Thompson L.S."/>
            <person name="Brettin T."/>
            <person name="Bruce D."/>
            <person name="Han C."/>
            <person name="Tapia R."/>
            <person name="Schmutz J."/>
            <person name="Larimer F."/>
            <person name="Land M."/>
            <person name="Hauser L."/>
            <person name="Kyrpides N."/>
            <person name="Kim E."/>
            <person name="Mattes T."/>
            <person name="Gossett J."/>
            <person name="Richardson P."/>
        </authorList>
    </citation>
    <scope>NUCLEOTIDE SEQUENCE [LARGE SCALE GENOMIC DNA]</scope>
    <source>
        <strain>ATCC BAA-499 / JS614</strain>
    </source>
</reference>